<accession>P01515</accession>
<protein>
    <recommendedName>
        <fullName evidence="9">Mastoparan-X</fullName>
        <shortName evidence="9">MP-X</shortName>
        <shortName evidence="8">MPX</shortName>
    </recommendedName>
</protein>
<evidence type="ECO:0000250" key="1">
    <source>
        <dbReference type="UniProtKB" id="P01514"/>
    </source>
</evidence>
<evidence type="ECO:0000250" key="2">
    <source>
        <dbReference type="UniProtKB" id="P84914"/>
    </source>
</evidence>
<evidence type="ECO:0000269" key="3">
    <source>
    </source>
</evidence>
<evidence type="ECO:0000269" key="4">
    <source>
    </source>
</evidence>
<evidence type="ECO:0000269" key="5">
    <source>
    </source>
</evidence>
<evidence type="ECO:0000269" key="6">
    <source>
    </source>
</evidence>
<evidence type="ECO:0000269" key="7">
    <source>
    </source>
</evidence>
<evidence type="ECO:0000303" key="8">
    <source>
    </source>
</evidence>
<evidence type="ECO:0000303" key="9">
    <source>
    </source>
</evidence>
<evidence type="ECO:0000305" key="10"/>
<evidence type="ECO:0000305" key="11">
    <source>
    </source>
</evidence>
<evidence type="ECO:0000305" key="12">
    <source>
    </source>
</evidence>
<evidence type="ECO:0000305" key="13">
    <source>
    </source>
</evidence>
<evidence type="ECO:0007829" key="14">
    <source>
        <dbReference type="PDB" id="1A13"/>
    </source>
</evidence>
<name>MAST_VESXA</name>
<keyword id="KW-0002">3D-structure</keyword>
<keyword id="KW-0027">Amidation</keyword>
<keyword id="KW-0044">Antibiotic</keyword>
<keyword id="KW-0929">Antimicrobial</keyword>
<keyword id="KW-0903">Direct protein sequencing</keyword>
<keyword id="KW-0295">Fungicide</keyword>
<keyword id="KW-1213">G-protein coupled receptor impairing toxin</keyword>
<keyword id="KW-0391">Immunity</keyword>
<keyword id="KW-0399">Innate immunity</keyword>
<keyword id="KW-0467">Mast cell degranulation</keyword>
<keyword id="KW-0472">Membrane</keyword>
<keyword id="KW-0964">Secreted</keyword>
<keyword id="KW-1052">Target cell membrane</keyword>
<keyword id="KW-1053">Target membrane</keyword>
<keyword id="KW-0800">Toxin</keyword>
<reference key="1">
    <citation type="journal article" date="1979" name="Chem. Pharm. Bull.">
        <title>A new mast cell degranulating peptide homologous to mastoparan in the venom of Japanese hornet (Vespa xanthoptera).</title>
        <authorList>
            <person name="Hirai Y."/>
            <person name="Kuwada M."/>
            <person name="Yasuhara T."/>
            <person name="Yoshida H."/>
            <person name="Nakajima T."/>
        </authorList>
    </citation>
    <scope>PROTEIN SEQUENCE</scope>
    <scope>FUNCTION</scope>
    <scope>AMIDATION AT LEU-14</scope>
    <scope>SUBCELLULAR LOCATION</scope>
    <source>
        <tissue>Venom</tissue>
    </source>
</reference>
<reference key="2">
    <citation type="journal article" date="1992" name="FEBS Lett.">
        <title>Membrane interactions of mastoparan analogues related to their differential effects on protein kinase C, Na, K-ATPase and HL60 cells.</title>
        <authorList>
            <person name="Raynor R.L."/>
            <person name="Kim Y.S."/>
            <person name="Zheng B."/>
            <person name="Vogler W.R."/>
            <person name="Kuo J.F."/>
        </authorList>
    </citation>
    <scope>FUNCTION</scope>
</reference>
<reference key="3">
    <citation type="journal article" date="2018" name="Mol. Neurobiol.">
        <title>Pro-necrotic activity of cationic mastoparan peptides in human glioblastoma multiforme cells via membranolytic action.</title>
        <authorList>
            <person name="da Silva A.M.B."/>
            <person name="Silva-Goncalves L.C."/>
            <person name="Oliveira F.A."/>
            <person name="Arcisio-Miranda M."/>
        </authorList>
    </citation>
    <scope>FUNCTION</scope>
    <scope>SUBCELLULAR LOCATION</scope>
</reference>
<reference key="4">
    <citation type="journal article" date="2016" name="Molecules">
        <title>MP-V1 from the venom of social wasp vespula vulgaris is a de novo type of mastoparan that displays superior antimicrobial activities.</title>
        <authorList>
            <person name="Kim Y."/>
            <person name="Son M."/>
            <person name="Noh E.Y."/>
            <person name="Kim S."/>
            <person name="Kim C."/>
            <person name="Yeo J.H."/>
            <person name="Park C."/>
            <person name="Lee K.W."/>
            <person name="Bang W.Y."/>
        </authorList>
    </citation>
    <scope>FUNCTION</scope>
    <scope>SYNTHESIS</scope>
    <scope>SUBCELLULAR LOCATION</scope>
</reference>
<reference key="5">
    <citation type="journal article" date="1992" name="Biochemistry">
        <title>Membrane-bound conformation of mastoparan-X, a G-protein-activating peptide.</title>
        <authorList>
            <person name="Wakamatsu K."/>
            <person name="Okada A."/>
            <person name="Miyazawa T."/>
            <person name="Ohya M."/>
            <person name="Higashijima T."/>
        </authorList>
    </citation>
    <scope>STRUCTURE BY NMR</scope>
    <scope>SUBCELLULAR LOCATION</scope>
</reference>
<reference key="6">
    <citation type="journal article" date="1998" name="Biochemistry">
        <title>G protein-bound conformation of mastoparan-X: heteronuclear multidimensional transferred nuclear overhauser effect analysis of peptide uniformly enriched with 13C and 15N.</title>
        <authorList>
            <person name="Kusunoki H."/>
            <person name="Wakamatsu K."/>
            <person name="Sato K."/>
            <person name="Miyazawa T."/>
            <person name="Kohno T."/>
        </authorList>
    </citation>
    <scope>STRUCTURE BY NMR</scope>
</reference>
<dbReference type="PIR" id="A01778">
    <property type="entry name" value="QMVHXX"/>
</dbReference>
<dbReference type="PDB" id="1A13">
    <property type="method" value="NMR"/>
    <property type="chains" value="A=1-14"/>
</dbReference>
<dbReference type="PDB" id="2CZP">
    <property type="method" value="NMR"/>
    <property type="chains" value="A=1-14"/>
</dbReference>
<dbReference type="PDBsum" id="1A13"/>
<dbReference type="PDBsum" id="2CZP"/>
<dbReference type="BMRB" id="P01515"/>
<dbReference type="SMR" id="P01515"/>
<dbReference type="TCDB" id="1.C.32.1.2">
    <property type="family name" value="the amphipathic peptide mastoparan (mastoparan) family"/>
</dbReference>
<dbReference type="EvolutionaryTrace" id="P01515"/>
<dbReference type="GO" id="GO:0005576">
    <property type="term" value="C:extracellular region"/>
    <property type="evidence" value="ECO:0007669"/>
    <property type="project" value="UniProtKB-SubCell"/>
</dbReference>
<dbReference type="GO" id="GO:0016020">
    <property type="term" value="C:membrane"/>
    <property type="evidence" value="ECO:0007669"/>
    <property type="project" value="UniProtKB-KW"/>
</dbReference>
<dbReference type="GO" id="GO:0044218">
    <property type="term" value="C:other organism cell membrane"/>
    <property type="evidence" value="ECO:0007669"/>
    <property type="project" value="UniProtKB-KW"/>
</dbReference>
<dbReference type="GO" id="GO:0090729">
    <property type="term" value="F:toxin activity"/>
    <property type="evidence" value="ECO:0007669"/>
    <property type="project" value="UniProtKB-KW"/>
</dbReference>
<dbReference type="GO" id="GO:0042742">
    <property type="term" value="P:defense response to bacterium"/>
    <property type="evidence" value="ECO:0007669"/>
    <property type="project" value="UniProtKB-KW"/>
</dbReference>
<dbReference type="GO" id="GO:0050832">
    <property type="term" value="P:defense response to fungus"/>
    <property type="evidence" value="ECO:0007669"/>
    <property type="project" value="UniProtKB-KW"/>
</dbReference>
<dbReference type="GO" id="GO:0045087">
    <property type="term" value="P:innate immune response"/>
    <property type="evidence" value="ECO:0007669"/>
    <property type="project" value="UniProtKB-KW"/>
</dbReference>
<dbReference type="GO" id="GO:0031640">
    <property type="term" value="P:killing of cells of another organism"/>
    <property type="evidence" value="ECO:0007669"/>
    <property type="project" value="UniProtKB-KW"/>
</dbReference>
<dbReference type="IDEAL" id="IID50241"/>
<dbReference type="InterPro" id="IPR013213">
    <property type="entry name" value="Mastoparan"/>
</dbReference>
<dbReference type="Pfam" id="PF08249">
    <property type="entry name" value="Mastoparan"/>
    <property type="match status" value="1"/>
</dbReference>
<feature type="peptide" id="PRO_0000044063" description="Mastoparan-X" evidence="7">
    <location>
        <begin position="1"/>
        <end position="14"/>
    </location>
</feature>
<feature type="modified residue" description="Leucine amide" evidence="7">
    <location>
        <position position="14"/>
    </location>
</feature>
<feature type="strand" evidence="14">
    <location>
        <begin position="3"/>
        <end position="5"/>
    </location>
</feature>
<feature type="helix" evidence="14">
    <location>
        <begin position="6"/>
        <end position="10"/>
    </location>
</feature>
<proteinExistence type="evidence at protein level"/>
<organism>
    <name type="scientific">Vespa xanthoptera</name>
    <name type="common">Japanese yellow hornet</name>
    <name type="synonym">Vespa simillima xanthoptera</name>
    <dbReference type="NCBI Taxonomy" id="7448"/>
    <lineage>
        <taxon>Eukaryota</taxon>
        <taxon>Metazoa</taxon>
        <taxon>Ecdysozoa</taxon>
        <taxon>Arthropoda</taxon>
        <taxon>Hexapoda</taxon>
        <taxon>Insecta</taxon>
        <taxon>Pterygota</taxon>
        <taxon>Neoptera</taxon>
        <taxon>Endopterygota</taxon>
        <taxon>Hymenoptera</taxon>
        <taxon>Apocrita</taxon>
        <taxon>Aculeata</taxon>
        <taxon>Vespoidea</taxon>
        <taxon>Vespidae</taxon>
        <taxon>Vespinae</taxon>
        <taxon>Vespa</taxon>
    </lineage>
</organism>
<comment type="function">
    <text evidence="1 2 3 5 6 7 11">Antimicrobial peptide with moderate activity on Gram-positive (S.mutans, and S.aureus), and Gram-negative bacteria (S.enterica), as well as on fungi (C.albicans, C.glabrata, and C.neoformans) (PubMed:27104500). Also acts as a mast cell degranulating peptide (PubMed:540363). Its mast cell degranulation activity may be related to the activation of G-protein coupled receptors in mast cells as well as interaction with other proteins located in cell endosomal membranes in the mast cells (By similarity). Activates G proteins that couple to phospholipase C (Probable). Does not cause hemolysis to human erythrocytes (PubMed:27104500). Decreases the proliferation and viability of human leukemia HL60 cells (PubMed:1322833). Has a membranolytic activity on human glioblastoma multiforme cells (brain tumor cells) that leads to cell necrosis (PubMed:28965321).</text>
</comment>
<comment type="subcellular location">
    <subcellularLocation>
        <location evidence="7">Secreted</location>
    </subcellularLocation>
    <subcellularLocation>
        <location evidence="4">Target cell membrane</location>
    </subcellularLocation>
    <text evidence="4 6 12">Has an amphipathic alpha-helical conformation in a lipid environment.</text>
</comment>
<comment type="tissue specificity">
    <text evidence="13">Expressed by the venom gland.</text>
</comment>
<comment type="similarity">
    <text evidence="10">Belongs to the MCD family. Mastoparan subfamily.</text>
</comment>
<sequence>INWKGIAAMAKKLL</sequence>